<sequence>MEILNEPSSTYHQPVLLEESLQGLAIQPDGIYIDTTFGGGGHAKAILAQLKRGKLFAFDQDEDAESIASTWHDPNFTFIRANSRFIQRFLAYHQIEKIDGLIADLGVSSYQIDTALRGFSTRSEGPLDMRMDQSSSLTASQIVNTYSFEALTQLFRTYGELHSAPALAKALIAARTKHPIETTQSLKEIALPFSPPRKSAKFLAQVFQALRIEVNDELGALKSLLEQSLQLLKPGGRLVIISYHSLEDRLVKRFIKTGNFEGELDKDMYGNPLQPFVPVYKKAIVPTEEELVINSRSRSAKLRVGERTAL</sequence>
<dbReference type="EC" id="2.1.1.199" evidence="1"/>
<dbReference type="EMBL" id="CP001102">
    <property type="protein sequence ID" value="ACE06275.1"/>
    <property type="molecule type" value="Genomic_DNA"/>
</dbReference>
<dbReference type="RefSeq" id="WP_012473039.1">
    <property type="nucleotide sequence ID" value="NC_010830.1"/>
</dbReference>
<dbReference type="SMR" id="B3ESS3"/>
<dbReference type="STRING" id="452471.Aasi_0908"/>
<dbReference type="KEGG" id="aas:Aasi_0908"/>
<dbReference type="eggNOG" id="COG0275">
    <property type="taxonomic scope" value="Bacteria"/>
</dbReference>
<dbReference type="HOGENOM" id="CLU_038422_2_0_10"/>
<dbReference type="OrthoDB" id="9806637at2"/>
<dbReference type="Proteomes" id="UP000001227">
    <property type="component" value="Chromosome"/>
</dbReference>
<dbReference type="GO" id="GO:0005737">
    <property type="term" value="C:cytoplasm"/>
    <property type="evidence" value="ECO:0007669"/>
    <property type="project" value="UniProtKB-SubCell"/>
</dbReference>
<dbReference type="GO" id="GO:0071424">
    <property type="term" value="F:rRNA (cytosine-N4-)-methyltransferase activity"/>
    <property type="evidence" value="ECO:0007669"/>
    <property type="project" value="UniProtKB-UniRule"/>
</dbReference>
<dbReference type="GO" id="GO:0070475">
    <property type="term" value="P:rRNA base methylation"/>
    <property type="evidence" value="ECO:0007669"/>
    <property type="project" value="UniProtKB-UniRule"/>
</dbReference>
<dbReference type="Gene3D" id="1.10.150.170">
    <property type="entry name" value="Putative methyltransferase TM0872, insert domain"/>
    <property type="match status" value="1"/>
</dbReference>
<dbReference type="Gene3D" id="3.40.50.150">
    <property type="entry name" value="Vaccinia Virus protein VP39"/>
    <property type="match status" value="1"/>
</dbReference>
<dbReference type="HAMAP" id="MF_01007">
    <property type="entry name" value="16SrRNA_methyltr_H"/>
    <property type="match status" value="1"/>
</dbReference>
<dbReference type="InterPro" id="IPR002903">
    <property type="entry name" value="RsmH"/>
</dbReference>
<dbReference type="InterPro" id="IPR023397">
    <property type="entry name" value="SAM-dep_MeTrfase_MraW_recog"/>
</dbReference>
<dbReference type="InterPro" id="IPR029063">
    <property type="entry name" value="SAM-dependent_MTases_sf"/>
</dbReference>
<dbReference type="NCBIfam" id="TIGR00006">
    <property type="entry name" value="16S rRNA (cytosine(1402)-N(4))-methyltransferase RsmH"/>
    <property type="match status" value="1"/>
</dbReference>
<dbReference type="PANTHER" id="PTHR11265:SF0">
    <property type="entry name" value="12S RRNA N4-METHYLCYTIDINE METHYLTRANSFERASE"/>
    <property type="match status" value="1"/>
</dbReference>
<dbReference type="PANTHER" id="PTHR11265">
    <property type="entry name" value="S-ADENOSYL-METHYLTRANSFERASE MRAW"/>
    <property type="match status" value="1"/>
</dbReference>
<dbReference type="Pfam" id="PF01795">
    <property type="entry name" value="Methyltransf_5"/>
    <property type="match status" value="1"/>
</dbReference>
<dbReference type="PIRSF" id="PIRSF004486">
    <property type="entry name" value="MraW"/>
    <property type="match status" value="1"/>
</dbReference>
<dbReference type="SUPFAM" id="SSF81799">
    <property type="entry name" value="Putative methyltransferase TM0872, insert domain"/>
    <property type="match status" value="1"/>
</dbReference>
<dbReference type="SUPFAM" id="SSF53335">
    <property type="entry name" value="S-adenosyl-L-methionine-dependent methyltransferases"/>
    <property type="match status" value="1"/>
</dbReference>
<feature type="chain" id="PRO_0000386710" description="Ribosomal RNA small subunit methyltransferase H">
    <location>
        <begin position="1"/>
        <end position="310"/>
    </location>
</feature>
<feature type="binding site" evidence="1">
    <location>
        <begin position="40"/>
        <end position="42"/>
    </location>
    <ligand>
        <name>S-adenosyl-L-methionine</name>
        <dbReference type="ChEBI" id="CHEBI:59789"/>
    </ligand>
</feature>
<feature type="binding site" evidence="1">
    <location>
        <position position="59"/>
    </location>
    <ligand>
        <name>S-adenosyl-L-methionine</name>
        <dbReference type="ChEBI" id="CHEBI:59789"/>
    </ligand>
</feature>
<feature type="binding site" evidence="1">
    <location>
        <position position="89"/>
    </location>
    <ligand>
        <name>S-adenosyl-L-methionine</name>
        <dbReference type="ChEBI" id="CHEBI:59789"/>
    </ligand>
</feature>
<feature type="binding site" evidence="1">
    <location>
        <position position="104"/>
    </location>
    <ligand>
        <name>S-adenosyl-L-methionine</name>
        <dbReference type="ChEBI" id="CHEBI:59789"/>
    </ligand>
</feature>
<feature type="binding site" evidence="1">
    <location>
        <position position="111"/>
    </location>
    <ligand>
        <name>S-adenosyl-L-methionine</name>
        <dbReference type="ChEBI" id="CHEBI:59789"/>
    </ligand>
</feature>
<evidence type="ECO:0000255" key="1">
    <source>
        <dbReference type="HAMAP-Rule" id="MF_01007"/>
    </source>
</evidence>
<comment type="function">
    <text evidence="1">Specifically methylates the N4 position of cytidine in position 1402 (C1402) of 16S rRNA.</text>
</comment>
<comment type="catalytic activity">
    <reaction evidence="1">
        <text>cytidine(1402) in 16S rRNA + S-adenosyl-L-methionine = N(4)-methylcytidine(1402) in 16S rRNA + S-adenosyl-L-homocysteine + H(+)</text>
        <dbReference type="Rhea" id="RHEA:42928"/>
        <dbReference type="Rhea" id="RHEA-COMP:10286"/>
        <dbReference type="Rhea" id="RHEA-COMP:10287"/>
        <dbReference type="ChEBI" id="CHEBI:15378"/>
        <dbReference type="ChEBI" id="CHEBI:57856"/>
        <dbReference type="ChEBI" id="CHEBI:59789"/>
        <dbReference type="ChEBI" id="CHEBI:74506"/>
        <dbReference type="ChEBI" id="CHEBI:82748"/>
        <dbReference type="EC" id="2.1.1.199"/>
    </reaction>
</comment>
<comment type="subcellular location">
    <subcellularLocation>
        <location evidence="1">Cytoplasm</location>
    </subcellularLocation>
</comment>
<comment type="similarity">
    <text evidence="1">Belongs to the methyltransferase superfamily. RsmH family.</text>
</comment>
<name>RSMH_AMOA5</name>
<keyword id="KW-0963">Cytoplasm</keyword>
<keyword id="KW-0489">Methyltransferase</keyword>
<keyword id="KW-1185">Reference proteome</keyword>
<keyword id="KW-0698">rRNA processing</keyword>
<keyword id="KW-0949">S-adenosyl-L-methionine</keyword>
<keyword id="KW-0808">Transferase</keyword>
<gene>
    <name evidence="1" type="primary">rsmH</name>
    <name type="synonym">mraW</name>
    <name type="ordered locus">Aasi_0908</name>
</gene>
<reference key="1">
    <citation type="journal article" date="2010" name="J. Bacteriol.">
        <title>The genome of the amoeba symbiont 'Candidatus Amoebophilus asiaticus' reveals common mechanisms for host cell interaction among amoeba-associated bacteria.</title>
        <authorList>
            <person name="Schmitz-Esser S."/>
            <person name="Tischler P."/>
            <person name="Arnold R."/>
            <person name="Montanaro J."/>
            <person name="Wagner M."/>
            <person name="Rattei T."/>
            <person name="Horn M."/>
        </authorList>
    </citation>
    <scope>NUCLEOTIDE SEQUENCE [LARGE SCALE GENOMIC DNA]</scope>
    <source>
        <strain>5a2</strain>
    </source>
</reference>
<protein>
    <recommendedName>
        <fullName evidence="1">Ribosomal RNA small subunit methyltransferase H</fullName>
        <ecNumber evidence="1">2.1.1.199</ecNumber>
    </recommendedName>
    <alternativeName>
        <fullName evidence="1">16S rRNA m(4)C1402 methyltransferase</fullName>
    </alternativeName>
    <alternativeName>
        <fullName evidence="1">rRNA (cytosine-N(4)-)-methyltransferase RsmH</fullName>
    </alternativeName>
</protein>
<accession>B3ESS3</accession>
<organism>
    <name type="scientific">Amoebophilus asiaticus (strain 5a2)</name>
    <dbReference type="NCBI Taxonomy" id="452471"/>
    <lineage>
        <taxon>Bacteria</taxon>
        <taxon>Pseudomonadati</taxon>
        <taxon>Bacteroidota</taxon>
        <taxon>Cytophagia</taxon>
        <taxon>Cytophagales</taxon>
        <taxon>Amoebophilaceae</taxon>
        <taxon>Candidatus Amoebophilus</taxon>
    </lineage>
</organism>
<proteinExistence type="inferred from homology"/>